<dbReference type="EC" id="2.1.1.195" evidence="1"/>
<dbReference type="EMBL" id="AE017180">
    <property type="protein sequence ID" value="AAR36389.1"/>
    <property type="molecule type" value="Genomic_DNA"/>
</dbReference>
<dbReference type="RefSeq" id="NP_954039.1">
    <property type="nucleotide sequence ID" value="NC_002939.5"/>
</dbReference>
<dbReference type="RefSeq" id="WP_010943627.1">
    <property type="nucleotide sequence ID" value="NC_002939.5"/>
</dbReference>
<dbReference type="SMR" id="P61985"/>
<dbReference type="STRING" id="243231.GSU2997"/>
<dbReference type="EnsemblBacteria" id="AAR36389">
    <property type="protein sequence ID" value="AAR36389"/>
    <property type="gene ID" value="GSU2997"/>
</dbReference>
<dbReference type="KEGG" id="gsu:GSU2997"/>
<dbReference type="PATRIC" id="fig|243231.5.peg.3024"/>
<dbReference type="eggNOG" id="COG1903">
    <property type="taxonomic scope" value="Bacteria"/>
</dbReference>
<dbReference type="HOGENOM" id="CLU_041273_0_0_7"/>
<dbReference type="InParanoid" id="P61985"/>
<dbReference type="OrthoDB" id="6439987at2"/>
<dbReference type="UniPathway" id="UPA00148">
    <property type="reaction ID" value="UER00227"/>
</dbReference>
<dbReference type="Proteomes" id="UP000000577">
    <property type="component" value="Chromosome"/>
</dbReference>
<dbReference type="GO" id="GO:0043780">
    <property type="term" value="F:cobalt-precorrin-5B C1-methyltransferase activity"/>
    <property type="evidence" value="ECO:0007669"/>
    <property type="project" value="RHEA"/>
</dbReference>
<dbReference type="GO" id="GO:0019251">
    <property type="term" value="P:anaerobic cobalamin biosynthetic process"/>
    <property type="evidence" value="ECO:0007669"/>
    <property type="project" value="UniProtKB-UniRule"/>
</dbReference>
<dbReference type="GO" id="GO:0032259">
    <property type="term" value="P:methylation"/>
    <property type="evidence" value="ECO:0007669"/>
    <property type="project" value="UniProtKB-KW"/>
</dbReference>
<dbReference type="Gene3D" id="3.30.2110.10">
    <property type="entry name" value="CbiD-like"/>
    <property type="match status" value="1"/>
</dbReference>
<dbReference type="HAMAP" id="MF_00787">
    <property type="entry name" value="CbiD"/>
    <property type="match status" value="1"/>
</dbReference>
<dbReference type="InterPro" id="IPR002748">
    <property type="entry name" value="CbiD"/>
</dbReference>
<dbReference type="InterPro" id="IPR036074">
    <property type="entry name" value="CbiD_sf"/>
</dbReference>
<dbReference type="NCBIfam" id="TIGR00312">
    <property type="entry name" value="cbiD"/>
    <property type="match status" value="1"/>
</dbReference>
<dbReference type="NCBIfam" id="NF000849">
    <property type="entry name" value="PRK00075.1-1"/>
    <property type="match status" value="1"/>
</dbReference>
<dbReference type="PANTHER" id="PTHR35863">
    <property type="entry name" value="COBALT-PRECORRIN-5B C(1)-METHYLTRANSFERASE"/>
    <property type="match status" value="1"/>
</dbReference>
<dbReference type="PANTHER" id="PTHR35863:SF1">
    <property type="entry name" value="COBALT-PRECORRIN-5B C(1)-METHYLTRANSFERASE"/>
    <property type="match status" value="1"/>
</dbReference>
<dbReference type="Pfam" id="PF01888">
    <property type="entry name" value="CbiD"/>
    <property type="match status" value="1"/>
</dbReference>
<dbReference type="PIRSF" id="PIRSF026782">
    <property type="entry name" value="CbiD"/>
    <property type="match status" value="1"/>
</dbReference>
<dbReference type="SUPFAM" id="SSF111342">
    <property type="entry name" value="CbiD-like"/>
    <property type="match status" value="1"/>
</dbReference>
<feature type="chain" id="PRO_0000141666" description="Cobalt-precorrin-5B C(1)-methyltransferase">
    <location>
        <begin position="1"/>
        <end position="362"/>
    </location>
</feature>
<organism>
    <name type="scientific">Geobacter sulfurreducens (strain ATCC 51573 / DSM 12127 / PCA)</name>
    <dbReference type="NCBI Taxonomy" id="243231"/>
    <lineage>
        <taxon>Bacteria</taxon>
        <taxon>Pseudomonadati</taxon>
        <taxon>Thermodesulfobacteriota</taxon>
        <taxon>Desulfuromonadia</taxon>
        <taxon>Geobacterales</taxon>
        <taxon>Geobacteraceae</taxon>
        <taxon>Geobacter</taxon>
    </lineage>
</organism>
<evidence type="ECO:0000255" key="1">
    <source>
        <dbReference type="HAMAP-Rule" id="MF_00787"/>
    </source>
</evidence>
<comment type="function">
    <text evidence="1">Catalyzes the methylation of C-1 in cobalt-precorrin-5B to form cobalt-precorrin-6A.</text>
</comment>
<comment type="catalytic activity">
    <reaction evidence="1">
        <text>Co-precorrin-5B + S-adenosyl-L-methionine = Co-precorrin-6A + S-adenosyl-L-homocysteine</text>
        <dbReference type="Rhea" id="RHEA:26285"/>
        <dbReference type="ChEBI" id="CHEBI:57856"/>
        <dbReference type="ChEBI" id="CHEBI:59789"/>
        <dbReference type="ChEBI" id="CHEBI:60063"/>
        <dbReference type="ChEBI" id="CHEBI:60064"/>
        <dbReference type="EC" id="2.1.1.195"/>
    </reaction>
</comment>
<comment type="pathway">
    <text evidence="1">Cofactor biosynthesis; adenosylcobalamin biosynthesis; cob(II)yrinate a,c-diamide from sirohydrochlorin (anaerobic route): step 6/10.</text>
</comment>
<comment type="similarity">
    <text evidence="1">Belongs to the CbiD family.</text>
</comment>
<protein>
    <recommendedName>
        <fullName evidence="1">Cobalt-precorrin-5B C(1)-methyltransferase</fullName>
        <ecNumber evidence="1">2.1.1.195</ecNumber>
    </recommendedName>
    <alternativeName>
        <fullName evidence="1">Cobalt-precorrin-6A synthase</fullName>
    </alternativeName>
</protein>
<sequence length="362" mass="38083">MSGRELRHGYTTGACAAAAAAGAARMLRRQELADEAEIVLPRGERVAFRLHGQEFTETWATCHVVKDAGDDPDVTNGAEIHATVRREALNRPGARTMVFVTGGRGVGTITKPGLAVPVGEPAINPVPMRMITEAVKAEFSVVCLPQILTVTVSIPNGEELAKKTLNARLGIVGGLSILGTTGIVRPISAKAWTDTLDAAIDVALACGCRTLVLSTGRTSELVVQGALAGEHLREEACVMMGDHVGYALRACARKGAEQAVLAGQFAKLLKIACGHEQTHVSSSELDLRLLAEWIAATPAASHLASLVEGANTARQVLEASGNDPALMELVCSRAREAARLLAPSLRIKVLLAGYDSTVLYFG</sequence>
<reference key="1">
    <citation type="journal article" date="2003" name="Science">
        <title>Genome of Geobacter sulfurreducens: metal reduction in subsurface environments.</title>
        <authorList>
            <person name="Methe B.A."/>
            <person name="Nelson K.E."/>
            <person name="Eisen J.A."/>
            <person name="Paulsen I.T."/>
            <person name="Nelson W.C."/>
            <person name="Heidelberg J.F."/>
            <person name="Wu D."/>
            <person name="Wu M."/>
            <person name="Ward N.L."/>
            <person name="Beanan M.J."/>
            <person name="Dodson R.J."/>
            <person name="Madupu R."/>
            <person name="Brinkac L.M."/>
            <person name="Daugherty S.C."/>
            <person name="DeBoy R.T."/>
            <person name="Durkin A.S."/>
            <person name="Gwinn M.L."/>
            <person name="Kolonay J.F."/>
            <person name="Sullivan S.A."/>
            <person name="Haft D.H."/>
            <person name="Selengut J."/>
            <person name="Davidsen T.M."/>
            <person name="Zafar N."/>
            <person name="White O."/>
            <person name="Tran B."/>
            <person name="Romero C."/>
            <person name="Forberger H.A."/>
            <person name="Weidman J.F."/>
            <person name="Khouri H.M."/>
            <person name="Feldblyum T.V."/>
            <person name="Utterback T.R."/>
            <person name="Van Aken S.E."/>
            <person name="Lovley D.R."/>
            <person name="Fraser C.M."/>
        </authorList>
    </citation>
    <scope>NUCLEOTIDE SEQUENCE [LARGE SCALE GENOMIC DNA]</scope>
    <source>
        <strain>ATCC 51573 / DSM 12127 / PCA</strain>
    </source>
</reference>
<name>CBID_GEOSL</name>
<gene>
    <name evidence="1" type="primary">cbiD</name>
    <name type="ordered locus">GSU2997</name>
</gene>
<proteinExistence type="inferred from homology"/>
<accession>P61985</accession>
<keyword id="KW-0169">Cobalamin biosynthesis</keyword>
<keyword id="KW-0489">Methyltransferase</keyword>
<keyword id="KW-1185">Reference proteome</keyword>
<keyword id="KW-0949">S-adenosyl-L-methionine</keyword>
<keyword id="KW-0808">Transferase</keyword>